<evidence type="ECO:0000255" key="1">
    <source>
        <dbReference type="HAMAP-Rule" id="MF_00129"/>
    </source>
</evidence>
<accession>B0VLL2</accession>
<dbReference type="EMBL" id="CU468230">
    <property type="protein sequence ID" value="CAP00861.1"/>
    <property type="molecule type" value="Genomic_DNA"/>
</dbReference>
<dbReference type="SMR" id="B0VLL2"/>
<dbReference type="KEGG" id="abm:ABSDF1520"/>
<dbReference type="HOGENOM" id="CLU_007831_2_2_6"/>
<dbReference type="Proteomes" id="UP000001741">
    <property type="component" value="Chromosome"/>
</dbReference>
<dbReference type="GO" id="GO:0005829">
    <property type="term" value="C:cytosol"/>
    <property type="evidence" value="ECO:0007669"/>
    <property type="project" value="TreeGrafter"/>
</dbReference>
<dbReference type="GO" id="GO:0050660">
    <property type="term" value="F:flavin adenine dinucleotide binding"/>
    <property type="evidence" value="ECO:0007669"/>
    <property type="project" value="UniProtKB-UniRule"/>
</dbReference>
<dbReference type="GO" id="GO:0030488">
    <property type="term" value="P:tRNA methylation"/>
    <property type="evidence" value="ECO:0007669"/>
    <property type="project" value="TreeGrafter"/>
</dbReference>
<dbReference type="GO" id="GO:0002098">
    <property type="term" value="P:tRNA wobble uridine modification"/>
    <property type="evidence" value="ECO:0007669"/>
    <property type="project" value="InterPro"/>
</dbReference>
<dbReference type="FunFam" id="1.10.10.1800:FF:000001">
    <property type="entry name" value="tRNA uridine 5-carboxymethylaminomethyl modification enzyme MnmG"/>
    <property type="match status" value="1"/>
</dbReference>
<dbReference type="FunFam" id="1.10.150.570:FF:000001">
    <property type="entry name" value="tRNA uridine 5-carboxymethylaminomethyl modification enzyme MnmG"/>
    <property type="match status" value="1"/>
</dbReference>
<dbReference type="FunFam" id="3.50.50.60:FF:000002">
    <property type="entry name" value="tRNA uridine 5-carboxymethylaminomethyl modification enzyme MnmG"/>
    <property type="match status" value="1"/>
</dbReference>
<dbReference type="FunFam" id="3.50.50.60:FF:000010">
    <property type="entry name" value="tRNA uridine 5-carboxymethylaminomethyl modification enzyme MnmG"/>
    <property type="match status" value="1"/>
</dbReference>
<dbReference type="Gene3D" id="3.50.50.60">
    <property type="entry name" value="FAD/NAD(P)-binding domain"/>
    <property type="match status" value="2"/>
</dbReference>
<dbReference type="Gene3D" id="1.10.150.570">
    <property type="entry name" value="GidA associated domain, C-terminal subdomain"/>
    <property type="match status" value="1"/>
</dbReference>
<dbReference type="Gene3D" id="1.10.10.1800">
    <property type="entry name" value="tRNA uridine 5-carboxymethylaminomethyl modification enzyme MnmG/GidA"/>
    <property type="match status" value="1"/>
</dbReference>
<dbReference type="HAMAP" id="MF_00129">
    <property type="entry name" value="MnmG_GidA"/>
    <property type="match status" value="1"/>
</dbReference>
<dbReference type="InterPro" id="IPR036188">
    <property type="entry name" value="FAD/NAD-bd_sf"/>
</dbReference>
<dbReference type="InterPro" id="IPR049312">
    <property type="entry name" value="GIDA_C_N"/>
</dbReference>
<dbReference type="InterPro" id="IPR004416">
    <property type="entry name" value="MnmG"/>
</dbReference>
<dbReference type="InterPro" id="IPR002218">
    <property type="entry name" value="MnmG-rel"/>
</dbReference>
<dbReference type="InterPro" id="IPR020595">
    <property type="entry name" value="MnmG-rel_CS"/>
</dbReference>
<dbReference type="InterPro" id="IPR026904">
    <property type="entry name" value="MnmG_C"/>
</dbReference>
<dbReference type="InterPro" id="IPR047001">
    <property type="entry name" value="MnmG_C_subdom"/>
</dbReference>
<dbReference type="InterPro" id="IPR044920">
    <property type="entry name" value="MnmG_C_subdom_sf"/>
</dbReference>
<dbReference type="InterPro" id="IPR040131">
    <property type="entry name" value="MnmG_N"/>
</dbReference>
<dbReference type="NCBIfam" id="TIGR00136">
    <property type="entry name" value="mnmG_gidA"/>
    <property type="match status" value="1"/>
</dbReference>
<dbReference type="PANTHER" id="PTHR11806">
    <property type="entry name" value="GLUCOSE INHIBITED DIVISION PROTEIN A"/>
    <property type="match status" value="1"/>
</dbReference>
<dbReference type="PANTHER" id="PTHR11806:SF0">
    <property type="entry name" value="PROTEIN MTO1 HOMOLOG, MITOCHONDRIAL"/>
    <property type="match status" value="1"/>
</dbReference>
<dbReference type="Pfam" id="PF01134">
    <property type="entry name" value="GIDA"/>
    <property type="match status" value="1"/>
</dbReference>
<dbReference type="Pfam" id="PF21680">
    <property type="entry name" value="GIDA_C_1st"/>
    <property type="match status" value="1"/>
</dbReference>
<dbReference type="Pfam" id="PF13932">
    <property type="entry name" value="SAM_GIDA_C"/>
    <property type="match status" value="1"/>
</dbReference>
<dbReference type="SMART" id="SM01228">
    <property type="entry name" value="GIDA_assoc_3"/>
    <property type="match status" value="1"/>
</dbReference>
<dbReference type="SUPFAM" id="SSF51905">
    <property type="entry name" value="FAD/NAD(P)-binding domain"/>
    <property type="match status" value="1"/>
</dbReference>
<dbReference type="PROSITE" id="PS01280">
    <property type="entry name" value="GIDA_1"/>
    <property type="match status" value="1"/>
</dbReference>
<dbReference type="PROSITE" id="PS01281">
    <property type="entry name" value="GIDA_2"/>
    <property type="match status" value="1"/>
</dbReference>
<gene>
    <name evidence="1" type="primary">mnmG</name>
    <name evidence="1" type="synonym">gidA</name>
    <name type="ordered locus">ABSDF1520</name>
</gene>
<sequence>MHYPKVYDVIVIGGGHAGTEAALAAARMGRQTLLLTHNIETLGQMSCNPAIGGIGKSHLVREIDALGGAMALAADKGGIQFRILNSRKGAAVRATRAQADRVRYKAAIREILENQANLDIFQQAADDLIVEGDTVKGVVTQMGIRFDAKTVVLTTGTFLGGVIHVGLEKSSGGRAGDPPSIALAQRLRELKLPVGRLKTGTPPRIDARSVDFSVMTPQPGDFPSPVMSFMGDVSMHPEQVNCYITHTNEKTHDIIRGGLDRSPMYTGVIEGVGPRYCPSIEDKIHRFSDKDSHQVFLEPEGLDTHELYPNGISTSLPFDVQFELVRSIRGMENAHILRPGYAIEYDYFNPQALKFTLETKAINGLYFAGQINGTTGYEEAGAQGLLAGLNAARRAWEQEEWTPKRDQAYMGVLVDDLITLGTKEPYRMFTSRAEYRLMLREDNADQRLTTIGRELGLVDDVRWAAYCEKMEAVERETSRLQHLWAAPNNPMGKKFVEMTGADLSKECSAIDLLKRPNINFGQIAELTGSEVSQQVGEQIEIAVKYEGYINRQHEDVAQLKRLEETKIPADFDYDVVSGLSREITQKLKTVRPETLAQASRIPGVTPAAVQLVMITIRKNNMTKKTA</sequence>
<organism>
    <name type="scientific">Acinetobacter baumannii (strain SDF)</name>
    <dbReference type="NCBI Taxonomy" id="509170"/>
    <lineage>
        <taxon>Bacteria</taxon>
        <taxon>Pseudomonadati</taxon>
        <taxon>Pseudomonadota</taxon>
        <taxon>Gammaproteobacteria</taxon>
        <taxon>Moraxellales</taxon>
        <taxon>Moraxellaceae</taxon>
        <taxon>Acinetobacter</taxon>
        <taxon>Acinetobacter calcoaceticus/baumannii complex</taxon>
    </lineage>
</organism>
<protein>
    <recommendedName>
        <fullName evidence="1">tRNA uridine 5-carboxymethylaminomethyl modification enzyme MnmG</fullName>
    </recommendedName>
    <alternativeName>
        <fullName evidence="1">Glucose-inhibited division protein A</fullName>
    </alternativeName>
</protein>
<reference key="1">
    <citation type="journal article" date="2008" name="PLoS ONE">
        <title>Comparative analysis of Acinetobacters: three genomes for three lifestyles.</title>
        <authorList>
            <person name="Vallenet D."/>
            <person name="Nordmann P."/>
            <person name="Barbe V."/>
            <person name="Poirel L."/>
            <person name="Mangenot S."/>
            <person name="Bataille E."/>
            <person name="Dossat C."/>
            <person name="Gas S."/>
            <person name="Kreimeyer A."/>
            <person name="Lenoble P."/>
            <person name="Oztas S."/>
            <person name="Poulain J."/>
            <person name="Segurens B."/>
            <person name="Robert C."/>
            <person name="Abergel C."/>
            <person name="Claverie J.-M."/>
            <person name="Raoult D."/>
            <person name="Medigue C."/>
            <person name="Weissenbach J."/>
            <person name="Cruveiller S."/>
        </authorList>
    </citation>
    <scope>NUCLEOTIDE SEQUENCE [LARGE SCALE GENOMIC DNA]</scope>
    <source>
        <strain>SDF</strain>
    </source>
</reference>
<proteinExistence type="inferred from homology"/>
<name>MNMG_ACIBS</name>
<feature type="chain" id="PRO_1000095640" description="tRNA uridine 5-carboxymethylaminomethyl modification enzyme MnmG">
    <location>
        <begin position="1"/>
        <end position="626"/>
    </location>
</feature>
<feature type="binding site" evidence="1">
    <location>
        <begin position="13"/>
        <end position="18"/>
    </location>
    <ligand>
        <name>FAD</name>
        <dbReference type="ChEBI" id="CHEBI:57692"/>
    </ligand>
</feature>
<feature type="binding site" evidence="1">
    <location>
        <begin position="273"/>
        <end position="287"/>
    </location>
    <ligand>
        <name>NAD(+)</name>
        <dbReference type="ChEBI" id="CHEBI:57540"/>
    </ligand>
</feature>
<keyword id="KW-0963">Cytoplasm</keyword>
<keyword id="KW-0274">FAD</keyword>
<keyword id="KW-0285">Flavoprotein</keyword>
<keyword id="KW-0520">NAD</keyword>
<keyword id="KW-0819">tRNA processing</keyword>
<comment type="function">
    <text evidence="1">NAD-binding protein involved in the addition of a carboxymethylaminomethyl (cmnm) group at the wobble position (U34) of certain tRNAs, forming tRNA-cmnm(5)s(2)U34.</text>
</comment>
<comment type="cofactor">
    <cofactor evidence="1">
        <name>FAD</name>
        <dbReference type="ChEBI" id="CHEBI:57692"/>
    </cofactor>
</comment>
<comment type="subunit">
    <text evidence="1">Homodimer. Heterotetramer of two MnmE and two MnmG subunits.</text>
</comment>
<comment type="subcellular location">
    <subcellularLocation>
        <location evidence="1">Cytoplasm</location>
    </subcellularLocation>
</comment>
<comment type="similarity">
    <text evidence="1">Belongs to the MnmG family.</text>
</comment>